<keyword id="KW-0002">3D-structure</keyword>
<keyword id="KW-0030">Aminoacyl-tRNA synthetase</keyword>
<keyword id="KW-0067">ATP-binding</keyword>
<keyword id="KW-0963">Cytoplasm</keyword>
<keyword id="KW-0436">Ligase</keyword>
<keyword id="KW-0547">Nucleotide-binding</keyword>
<keyword id="KW-0648">Protein biosynthesis</keyword>
<keyword id="KW-1185">Reference proteome</keyword>
<sequence length="438" mass="50785">MRVFIDEIARHVDQEVELRGWLYQRRSKGKIHFLILRDGTGFLQATVVQGEVPEAVFREADHLPQETALRVWGRVREDRRAPGGFELAVRDLQVVSRPQGEYPIGPKEHGIDFLMDHRHLWLRHRRPFAVMRIRDELERAIHEFFGERGFLRFDAPILTPSAVEGTTELFEVELFDGEKAYLSQSGQLYAEAGALAFAKVYTFGPTFRAERSKTRRHLLEFWMVEPEVAFMTHEENMALQEELVSFLVARVLERRSRELEMLGRDPKALEPAAEGHYPRLTYKEAVALVNRIAQEDPEVPPLPYGEDFGAPHEAALSRRFDRPVFVERYPARIKAFYMEPDPEDPELVLNDDLLAPEGYGEIIGGSQRIHDLELLRRKIQEFGLPEEVYDWYLDLRRFGSVPHSGFGLGLERTVAWICGLAHVREAIPFPRMYTRMRP</sequence>
<organism>
    <name type="scientific">Thermus thermophilus (strain ATCC 27634 / DSM 579 / HB8)</name>
    <dbReference type="NCBI Taxonomy" id="300852"/>
    <lineage>
        <taxon>Bacteria</taxon>
        <taxon>Thermotogati</taxon>
        <taxon>Deinococcota</taxon>
        <taxon>Deinococci</taxon>
        <taxon>Thermales</taxon>
        <taxon>Thermaceae</taxon>
        <taxon>Thermus</taxon>
    </lineage>
</organism>
<comment type="catalytic activity">
    <reaction evidence="1">
        <text>tRNA(Asn) + L-asparagine + ATP = L-asparaginyl-tRNA(Asn) + AMP + diphosphate + H(+)</text>
        <dbReference type="Rhea" id="RHEA:11180"/>
        <dbReference type="Rhea" id="RHEA-COMP:9659"/>
        <dbReference type="Rhea" id="RHEA-COMP:9674"/>
        <dbReference type="ChEBI" id="CHEBI:15378"/>
        <dbReference type="ChEBI" id="CHEBI:30616"/>
        <dbReference type="ChEBI" id="CHEBI:33019"/>
        <dbReference type="ChEBI" id="CHEBI:58048"/>
        <dbReference type="ChEBI" id="CHEBI:78442"/>
        <dbReference type="ChEBI" id="CHEBI:78515"/>
        <dbReference type="ChEBI" id="CHEBI:456215"/>
        <dbReference type="EC" id="6.1.1.22"/>
    </reaction>
</comment>
<comment type="subunit">
    <text>Homodimer.</text>
</comment>
<comment type="subcellular location">
    <subcellularLocation>
        <location>Cytoplasm</location>
    </subcellularLocation>
</comment>
<comment type="similarity">
    <text evidence="1">Belongs to the class-II aminoacyl-tRNA synthetase family.</text>
</comment>
<accession>P54263</accession>
<accession>Q5SKD5</accession>
<proteinExistence type="evidence at protein level"/>
<name>SYN_THET8</name>
<protein>
    <recommendedName>
        <fullName evidence="1">Asparagine--tRNA ligase</fullName>
        <ecNumber evidence="1">6.1.1.22</ecNumber>
    </recommendedName>
    <alternativeName>
        <fullName evidence="1">Asparaginyl-tRNA synthetase</fullName>
        <shortName evidence="1">AsnRS</shortName>
    </alternativeName>
</protein>
<dbReference type="EC" id="6.1.1.22" evidence="1"/>
<dbReference type="EMBL" id="X91009">
    <property type="protein sequence ID" value="CAA62491.1"/>
    <property type="molecule type" value="Genomic_DNA"/>
</dbReference>
<dbReference type="EMBL" id="AP008226">
    <property type="protein sequence ID" value="BAD70531.1"/>
    <property type="molecule type" value="Genomic_DNA"/>
</dbReference>
<dbReference type="RefSeq" id="WP_011228137.1">
    <property type="nucleotide sequence ID" value="NC_006461.1"/>
</dbReference>
<dbReference type="RefSeq" id="YP_143974.1">
    <property type="nucleotide sequence ID" value="NC_006461.1"/>
</dbReference>
<dbReference type="PDB" id="5ZG8">
    <property type="method" value="X-ray"/>
    <property type="resolution" value="2.40 A"/>
    <property type="chains" value="A=1-438"/>
</dbReference>
<dbReference type="PDBsum" id="5ZG8"/>
<dbReference type="SMR" id="P54263"/>
<dbReference type="EnsemblBacteria" id="BAD70531">
    <property type="protein sequence ID" value="BAD70531"/>
    <property type="gene ID" value="BAD70531"/>
</dbReference>
<dbReference type="GeneID" id="3168522"/>
<dbReference type="KEGG" id="ttj:TTHA0708"/>
<dbReference type="PATRIC" id="fig|300852.9.peg.702"/>
<dbReference type="eggNOG" id="COG0017">
    <property type="taxonomic scope" value="Bacteria"/>
</dbReference>
<dbReference type="HOGENOM" id="CLU_004553_2_0_0"/>
<dbReference type="PhylomeDB" id="P54263"/>
<dbReference type="BRENDA" id="6.1.1.22">
    <property type="organism ID" value="2305"/>
</dbReference>
<dbReference type="Proteomes" id="UP000000532">
    <property type="component" value="Chromosome"/>
</dbReference>
<dbReference type="GO" id="GO:0005737">
    <property type="term" value="C:cytoplasm"/>
    <property type="evidence" value="ECO:0000314"/>
    <property type="project" value="UniProtKB"/>
</dbReference>
<dbReference type="GO" id="GO:0004816">
    <property type="term" value="F:asparagine-tRNA ligase activity"/>
    <property type="evidence" value="ECO:0000314"/>
    <property type="project" value="UniProtKB"/>
</dbReference>
<dbReference type="GO" id="GO:0005524">
    <property type="term" value="F:ATP binding"/>
    <property type="evidence" value="ECO:0007669"/>
    <property type="project" value="UniProtKB-UniRule"/>
</dbReference>
<dbReference type="GO" id="GO:0003676">
    <property type="term" value="F:nucleic acid binding"/>
    <property type="evidence" value="ECO:0007669"/>
    <property type="project" value="InterPro"/>
</dbReference>
<dbReference type="GO" id="GO:0006421">
    <property type="term" value="P:asparaginyl-tRNA aminoacylation"/>
    <property type="evidence" value="ECO:0000314"/>
    <property type="project" value="UniProtKB"/>
</dbReference>
<dbReference type="CDD" id="cd04323">
    <property type="entry name" value="AsnRS_cyto_like_N"/>
    <property type="match status" value="1"/>
</dbReference>
<dbReference type="CDD" id="cd00776">
    <property type="entry name" value="AsxRS_core"/>
    <property type="match status" value="1"/>
</dbReference>
<dbReference type="FunFam" id="3.30.930.10:FF:000016">
    <property type="entry name" value="Asparagine--tRNA ligase"/>
    <property type="match status" value="1"/>
</dbReference>
<dbReference type="Gene3D" id="3.30.930.10">
    <property type="entry name" value="Bira Bifunctional Protein, Domain 2"/>
    <property type="match status" value="1"/>
</dbReference>
<dbReference type="Gene3D" id="2.40.50.140">
    <property type="entry name" value="Nucleic acid-binding proteins"/>
    <property type="match status" value="1"/>
</dbReference>
<dbReference type="HAMAP" id="MF_00534">
    <property type="entry name" value="Asn_tRNA_synth"/>
    <property type="match status" value="1"/>
</dbReference>
<dbReference type="InterPro" id="IPR004364">
    <property type="entry name" value="Aa-tRNA-synt_II"/>
</dbReference>
<dbReference type="InterPro" id="IPR006195">
    <property type="entry name" value="aa-tRNA-synth_II"/>
</dbReference>
<dbReference type="InterPro" id="IPR045864">
    <property type="entry name" value="aa-tRNA-synth_II/BPL/LPL"/>
</dbReference>
<dbReference type="InterPro" id="IPR004522">
    <property type="entry name" value="Asn-tRNA-ligase"/>
</dbReference>
<dbReference type="InterPro" id="IPR002312">
    <property type="entry name" value="Asp/Asn-tRNA-synth_IIb"/>
</dbReference>
<dbReference type="InterPro" id="IPR012340">
    <property type="entry name" value="NA-bd_OB-fold"/>
</dbReference>
<dbReference type="InterPro" id="IPR004365">
    <property type="entry name" value="NA-bd_OB_tRNA"/>
</dbReference>
<dbReference type="NCBIfam" id="TIGR00457">
    <property type="entry name" value="asnS"/>
    <property type="match status" value="1"/>
</dbReference>
<dbReference type="NCBIfam" id="NF003037">
    <property type="entry name" value="PRK03932.1"/>
    <property type="match status" value="1"/>
</dbReference>
<dbReference type="PANTHER" id="PTHR22594:SF34">
    <property type="entry name" value="ASPARAGINE--TRNA LIGASE, MITOCHONDRIAL-RELATED"/>
    <property type="match status" value="1"/>
</dbReference>
<dbReference type="PANTHER" id="PTHR22594">
    <property type="entry name" value="ASPARTYL/LYSYL-TRNA SYNTHETASE"/>
    <property type="match status" value="1"/>
</dbReference>
<dbReference type="Pfam" id="PF00152">
    <property type="entry name" value="tRNA-synt_2"/>
    <property type="match status" value="1"/>
</dbReference>
<dbReference type="Pfam" id="PF01336">
    <property type="entry name" value="tRNA_anti-codon"/>
    <property type="match status" value="1"/>
</dbReference>
<dbReference type="PRINTS" id="PR01042">
    <property type="entry name" value="TRNASYNTHASP"/>
</dbReference>
<dbReference type="SUPFAM" id="SSF55681">
    <property type="entry name" value="Class II aaRS and biotin synthetases"/>
    <property type="match status" value="1"/>
</dbReference>
<dbReference type="SUPFAM" id="SSF50249">
    <property type="entry name" value="Nucleic acid-binding proteins"/>
    <property type="match status" value="1"/>
</dbReference>
<dbReference type="PROSITE" id="PS50862">
    <property type="entry name" value="AA_TRNA_LIGASE_II"/>
    <property type="match status" value="1"/>
</dbReference>
<feature type="chain" id="PRO_0000176470" description="Asparagine--tRNA ligase">
    <location>
        <begin position="1"/>
        <end position="438"/>
    </location>
</feature>
<feature type="sequence conflict" description="In Ref. 1; CAA62491." evidence="2" ref="1">
    <original>A</original>
    <variation>R</variation>
    <location>
        <position position="355"/>
    </location>
</feature>
<feature type="helix" evidence="3">
    <location>
        <begin position="5"/>
        <end position="11"/>
    </location>
</feature>
<feature type="strand" evidence="3">
    <location>
        <begin position="14"/>
        <end position="28"/>
    </location>
</feature>
<feature type="strand" evidence="3">
    <location>
        <begin position="31"/>
        <end position="37"/>
    </location>
</feature>
<feature type="strand" evidence="3">
    <location>
        <begin position="42"/>
        <end position="49"/>
    </location>
</feature>
<feature type="helix" evidence="3">
    <location>
        <begin position="54"/>
        <end position="61"/>
    </location>
</feature>
<feature type="strand" evidence="3">
    <location>
        <begin position="68"/>
        <end position="77"/>
    </location>
</feature>
<feature type="strand" evidence="3">
    <location>
        <begin position="84"/>
        <end position="96"/>
    </location>
</feature>
<feature type="helix" evidence="3">
    <location>
        <begin position="111"/>
        <end position="116"/>
    </location>
</feature>
<feature type="helix" evidence="3">
    <location>
        <begin position="118"/>
        <end position="121"/>
    </location>
</feature>
<feature type="helix" evidence="3">
    <location>
        <begin position="125"/>
        <end position="147"/>
    </location>
</feature>
<feature type="strand" evidence="3">
    <location>
        <begin position="157"/>
        <end position="160"/>
    </location>
</feature>
<feature type="strand" evidence="3">
    <location>
        <begin position="169"/>
        <end position="173"/>
    </location>
</feature>
<feature type="strand" evidence="3">
    <location>
        <begin position="179"/>
        <end position="182"/>
    </location>
</feature>
<feature type="helix" evidence="3">
    <location>
        <begin position="187"/>
        <end position="197"/>
    </location>
</feature>
<feature type="strand" evidence="3">
    <location>
        <begin position="198"/>
        <end position="207"/>
    </location>
</feature>
<feature type="strand" evidence="3">
    <location>
        <begin position="218"/>
        <end position="229"/>
    </location>
</feature>
<feature type="helix" evidence="3">
    <location>
        <begin position="233"/>
        <end position="254"/>
    </location>
</feature>
<feature type="helix" evidence="3">
    <location>
        <begin position="256"/>
        <end position="262"/>
    </location>
</feature>
<feature type="helix" evidence="3">
    <location>
        <begin position="266"/>
        <end position="268"/>
    </location>
</feature>
<feature type="helix" evidence="3">
    <location>
        <begin position="270"/>
        <end position="274"/>
    </location>
</feature>
<feature type="strand" evidence="3">
    <location>
        <begin position="279"/>
        <end position="281"/>
    </location>
</feature>
<feature type="helix" evidence="3">
    <location>
        <begin position="282"/>
        <end position="295"/>
    </location>
</feature>
<feature type="helix" evidence="3">
    <location>
        <begin position="310"/>
        <end position="317"/>
    </location>
</feature>
<feature type="strand" evidence="3">
    <location>
        <begin position="320"/>
        <end position="322"/>
    </location>
</feature>
<feature type="strand" evidence="3">
    <location>
        <begin position="324"/>
        <end position="327"/>
    </location>
</feature>
<feature type="helix" evidence="3">
    <location>
        <begin position="331"/>
        <end position="333"/>
    </location>
</feature>
<feature type="strand" evidence="3">
    <location>
        <begin position="344"/>
        <end position="355"/>
    </location>
</feature>
<feature type="turn" evidence="3">
    <location>
        <begin position="356"/>
        <end position="359"/>
    </location>
</feature>
<feature type="strand" evidence="3">
    <location>
        <begin position="360"/>
        <end position="368"/>
    </location>
</feature>
<feature type="helix" evidence="3">
    <location>
        <begin position="372"/>
        <end position="381"/>
    </location>
</feature>
<feature type="helix" evidence="3">
    <location>
        <begin position="387"/>
        <end position="389"/>
    </location>
</feature>
<feature type="helix" evidence="3">
    <location>
        <begin position="390"/>
        <end position="397"/>
    </location>
</feature>
<feature type="strand" evidence="3">
    <location>
        <begin position="403"/>
        <end position="409"/>
    </location>
</feature>
<feature type="helix" evidence="3">
    <location>
        <begin position="410"/>
        <end position="418"/>
    </location>
</feature>
<feature type="helix" evidence="3">
    <location>
        <begin position="423"/>
        <end position="426"/>
    </location>
</feature>
<feature type="strand" evidence="3">
    <location>
        <begin position="427"/>
        <end position="429"/>
    </location>
</feature>
<feature type="strand" evidence="3">
    <location>
        <begin position="432"/>
        <end position="434"/>
    </location>
</feature>
<reference key="1">
    <citation type="journal article" date="1996" name="Eur. J. Biochem.">
        <title>Asparaginyl-tRNA synthetase from Thermus thermophilus HB8. Sequence of the gene and crystallization of the enzyme expressed in Escherichia coli.</title>
        <authorList>
            <person name="Seignovert L."/>
            <person name="Haertlein M."/>
            <person name="Leberman R."/>
        </authorList>
    </citation>
    <scope>NUCLEOTIDE SEQUENCE [GENOMIC DNA]</scope>
    <scope>CRYSTALLIZATION</scope>
</reference>
<reference key="2">
    <citation type="submission" date="2004-11" db="EMBL/GenBank/DDBJ databases">
        <title>Complete genome sequence of Thermus thermophilus HB8.</title>
        <authorList>
            <person name="Masui R."/>
            <person name="Kurokawa K."/>
            <person name="Nakagawa N."/>
            <person name="Tokunaga F."/>
            <person name="Koyama Y."/>
            <person name="Shibata T."/>
            <person name="Oshima T."/>
            <person name="Yokoyama S."/>
            <person name="Yasunaga T."/>
            <person name="Kuramitsu S."/>
        </authorList>
    </citation>
    <scope>NUCLEOTIDE SEQUENCE [LARGE SCALE GENOMIC DNA]</scope>
    <source>
        <strain>ATCC 27634 / DSM 579 / HB8</strain>
    </source>
</reference>
<reference key="3">
    <citation type="journal article" date="1998" name="EMBO J.">
        <title>The crystal structure of asparaginyl-tRNA synthetase from Thermus thermophilus and its complexes with ATP and asparaginyl-adenylate: the mechanism of discrimination between asparagine and aspartic acid.</title>
        <authorList>
            <person name="Berthet-Colominas C."/>
            <person name="Seignovert L."/>
            <person name="Haertlein M."/>
            <person name="Grotli M."/>
            <person name="Cusack S."/>
            <person name="Leberman R."/>
        </authorList>
    </citation>
    <scope>X-RAY CRYSTALLOGRAPHY (2.6 ANGSTROMS)</scope>
</reference>
<gene>
    <name evidence="1" type="primary">asnS</name>
    <name type="ordered locus">TTHA0708</name>
</gene>
<evidence type="ECO:0000255" key="1">
    <source>
        <dbReference type="HAMAP-Rule" id="MF_00534"/>
    </source>
</evidence>
<evidence type="ECO:0000305" key="2"/>
<evidence type="ECO:0007829" key="3">
    <source>
        <dbReference type="PDB" id="5ZG8"/>
    </source>
</evidence>